<name>SYK_RICTY</name>
<feature type="chain" id="PRO_0000278076" description="Lysine--tRNA ligase">
    <location>
        <begin position="1"/>
        <end position="526"/>
    </location>
</feature>
<feature type="short sequence motif" description="'HIGH' region">
    <location>
        <begin position="44"/>
        <end position="52"/>
    </location>
</feature>
<feature type="short sequence motif" description="'KMSKS' region">
    <location>
        <begin position="290"/>
        <end position="294"/>
    </location>
</feature>
<feature type="binding site" evidence="1">
    <location>
        <position position="293"/>
    </location>
    <ligand>
        <name>ATP</name>
        <dbReference type="ChEBI" id="CHEBI:30616"/>
    </ligand>
</feature>
<proteinExistence type="inferred from homology"/>
<reference key="1">
    <citation type="journal article" date="2004" name="J. Bacteriol.">
        <title>Complete genome sequence of Rickettsia typhi and comparison with sequences of other Rickettsiae.</title>
        <authorList>
            <person name="McLeod M.P."/>
            <person name="Qin X."/>
            <person name="Karpathy S.E."/>
            <person name="Gioia J."/>
            <person name="Highlander S.K."/>
            <person name="Fox G.E."/>
            <person name="McNeill T.Z."/>
            <person name="Jiang H."/>
            <person name="Muzny D."/>
            <person name="Jacob L.S."/>
            <person name="Hawes A.C."/>
            <person name="Sodergren E."/>
            <person name="Gill R."/>
            <person name="Hume J."/>
            <person name="Morgan M."/>
            <person name="Fan G."/>
            <person name="Amin A.G."/>
            <person name="Gibbs R.A."/>
            <person name="Hong C."/>
            <person name="Yu X.-J."/>
            <person name="Walker D.H."/>
            <person name="Weinstock G.M."/>
        </authorList>
    </citation>
    <scope>NUCLEOTIDE SEQUENCE [LARGE SCALE GENOMIC DNA]</scope>
    <source>
        <strain>ATCC VR-144 / Wilmington</strain>
    </source>
</reference>
<accession>Q68X04</accession>
<protein>
    <recommendedName>
        <fullName evidence="1">Lysine--tRNA ligase</fullName>
        <ecNumber evidence="1">6.1.1.6</ecNumber>
    </recommendedName>
    <alternativeName>
        <fullName evidence="1">Lysyl-tRNA synthetase</fullName>
        <shortName evidence="1">LysRS</shortName>
    </alternativeName>
</protein>
<evidence type="ECO:0000255" key="1">
    <source>
        <dbReference type="HAMAP-Rule" id="MF_00177"/>
    </source>
</evidence>
<organism>
    <name type="scientific">Rickettsia typhi (strain ATCC VR-144 / Wilmington)</name>
    <dbReference type="NCBI Taxonomy" id="257363"/>
    <lineage>
        <taxon>Bacteria</taxon>
        <taxon>Pseudomonadati</taxon>
        <taxon>Pseudomonadota</taxon>
        <taxon>Alphaproteobacteria</taxon>
        <taxon>Rickettsiales</taxon>
        <taxon>Rickettsiaceae</taxon>
        <taxon>Rickettsieae</taxon>
        <taxon>Rickettsia</taxon>
        <taxon>typhus group</taxon>
    </lineage>
</organism>
<gene>
    <name evidence="1" type="primary">lysS</name>
    <name type="ordered locus">RT0359</name>
</gene>
<dbReference type="EC" id="6.1.1.6" evidence="1"/>
<dbReference type="EMBL" id="AE017197">
    <property type="protein sequence ID" value="AAU03838.1"/>
    <property type="molecule type" value="Genomic_DNA"/>
</dbReference>
<dbReference type="RefSeq" id="WP_011190822.1">
    <property type="nucleotide sequence ID" value="NC_006142.1"/>
</dbReference>
<dbReference type="SMR" id="Q68X04"/>
<dbReference type="KEGG" id="rty:RT0359"/>
<dbReference type="eggNOG" id="COG1384">
    <property type="taxonomic scope" value="Bacteria"/>
</dbReference>
<dbReference type="HOGENOM" id="CLU_025562_2_0_5"/>
<dbReference type="OrthoDB" id="9803151at2"/>
<dbReference type="Proteomes" id="UP000000604">
    <property type="component" value="Chromosome"/>
</dbReference>
<dbReference type="GO" id="GO:0005737">
    <property type="term" value="C:cytoplasm"/>
    <property type="evidence" value="ECO:0007669"/>
    <property type="project" value="UniProtKB-SubCell"/>
</dbReference>
<dbReference type="GO" id="GO:0005524">
    <property type="term" value="F:ATP binding"/>
    <property type="evidence" value="ECO:0007669"/>
    <property type="project" value="UniProtKB-UniRule"/>
</dbReference>
<dbReference type="GO" id="GO:0004824">
    <property type="term" value="F:lysine-tRNA ligase activity"/>
    <property type="evidence" value="ECO:0007669"/>
    <property type="project" value="UniProtKB-UniRule"/>
</dbReference>
<dbReference type="GO" id="GO:0000049">
    <property type="term" value="F:tRNA binding"/>
    <property type="evidence" value="ECO:0007669"/>
    <property type="project" value="InterPro"/>
</dbReference>
<dbReference type="GO" id="GO:0006430">
    <property type="term" value="P:lysyl-tRNA aminoacylation"/>
    <property type="evidence" value="ECO:0007669"/>
    <property type="project" value="UniProtKB-UniRule"/>
</dbReference>
<dbReference type="Gene3D" id="1.10.10.350">
    <property type="match status" value="1"/>
</dbReference>
<dbReference type="Gene3D" id="3.40.50.620">
    <property type="entry name" value="HUPs"/>
    <property type="match status" value="2"/>
</dbReference>
<dbReference type="HAMAP" id="MF_00177">
    <property type="entry name" value="Lys_tRNA_synth_class1"/>
    <property type="match status" value="1"/>
</dbReference>
<dbReference type="InterPro" id="IPR020751">
    <property type="entry name" value="aa-tRNA-synth_I_codon-bd_sub2"/>
</dbReference>
<dbReference type="InterPro" id="IPR001412">
    <property type="entry name" value="aa-tRNA-synth_I_CS"/>
</dbReference>
<dbReference type="InterPro" id="IPR008925">
    <property type="entry name" value="aa_tRNA-synth_I_cd-bd_sf"/>
</dbReference>
<dbReference type="InterPro" id="IPR002904">
    <property type="entry name" value="Lys-tRNA-ligase"/>
</dbReference>
<dbReference type="InterPro" id="IPR014729">
    <property type="entry name" value="Rossmann-like_a/b/a_fold"/>
</dbReference>
<dbReference type="NCBIfam" id="TIGR00467">
    <property type="entry name" value="lysS_arch"/>
    <property type="match status" value="1"/>
</dbReference>
<dbReference type="NCBIfam" id="NF001968">
    <property type="entry name" value="PRK00750.1-2"/>
    <property type="match status" value="1"/>
</dbReference>
<dbReference type="PANTHER" id="PTHR37940">
    <property type="entry name" value="LYSINE--TRNA LIGASE"/>
    <property type="match status" value="1"/>
</dbReference>
<dbReference type="PANTHER" id="PTHR37940:SF1">
    <property type="entry name" value="LYSINE--TRNA LIGASE"/>
    <property type="match status" value="1"/>
</dbReference>
<dbReference type="Pfam" id="PF01921">
    <property type="entry name" value="tRNA-synt_1f"/>
    <property type="match status" value="1"/>
</dbReference>
<dbReference type="SUPFAM" id="SSF48163">
    <property type="entry name" value="An anticodon-binding domain of class I aminoacyl-tRNA synthetases"/>
    <property type="match status" value="1"/>
</dbReference>
<dbReference type="SUPFAM" id="SSF52374">
    <property type="entry name" value="Nucleotidylyl transferase"/>
    <property type="match status" value="1"/>
</dbReference>
<dbReference type="PROSITE" id="PS00178">
    <property type="entry name" value="AA_TRNA_LIGASE_I"/>
    <property type="match status" value="1"/>
</dbReference>
<sequence length="526" mass="60516">MSVIWKDAIRSNAWPFIEAKKILDSLNGKVPEKGYVLFETGYGPSGLPHIGTFAENARVVMVQKAFEQLSDIPTKLICFSDDMDGLRKVPSNIPNPEMVAQYMDMPLTSIPDPFGECKSYGHYMNAKLCTFLDKFGFQYEFYSSTNCYKAGLFDDMLIRVLEKYDEIMALMLPTFREERKTTYAPFMPICPKTGKVLQVPIEKWDARAGTVSYKDEDGNDVEVPVTGGHCKLQWKPDFGMRWAALNVDYEMYGKDHLANSRLYSKICQILGGKPPVQFCYELFLDENGEKISKSRGNSISVDDWLKYASVESIALFMYKNPARAKRLFFDVIPKNVDEYITLNQKYHLEEDMVTRFANPVYHIHHGNVPKIETFGLTYSLLLNLTAVCNPSDKSVLWGFITKYEPKATPNTSTYLDHLAEFAIRYYHDFVQIHKSYLVVSEKHKIILYDILDMLSNITDQTEEENIQKAMYDIGMKAGYKNLRYYFKDLYQILLGQNEGPRFGTFIKLYGVEATKKLVEEKLYPVA</sequence>
<keyword id="KW-0030">Aminoacyl-tRNA synthetase</keyword>
<keyword id="KW-0067">ATP-binding</keyword>
<keyword id="KW-0963">Cytoplasm</keyword>
<keyword id="KW-0436">Ligase</keyword>
<keyword id="KW-0547">Nucleotide-binding</keyword>
<keyword id="KW-0648">Protein biosynthesis</keyword>
<comment type="catalytic activity">
    <reaction evidence="1">
        <text>tRNA(Lys) + L-lysine + ATP = L-lysyl-tRNA(Lys) + AMP + diphosphate</text>
        <dbReference type="Rhea" id="RHEA:20792"/>
        <dbReference type="Rhea" id="RHEA-COMP:9696"/>
        <dbReference type="Rhea" id="RHEA-COMP:9697"/>
        <dbReference type="ChEBI" id="CHEBI:30616"/>
        <dbReference type="ChEBI" id="CHEBI:32551"/>
        <dbReference type="ChEBI" id="CHEBI:33019"/>
        <dbReference type="ChEBI" id="CHEBI:78442"/>
        <dbReference type="ChEBI" id="CHEBI:78529"/>
        <dbReference type="ChEBI" id="CHEBI:456215"/>
        <dbReference type="EC" id="6.1.1.6"/>
    </reaction>
</comment>
<comment type="subcellular location">
    <subcellularLocation>
        <location evidence="1">Cytoplasm</location>
    </subcellularLocation>
</comment>
<comment type="similarity">
    <text evidence="1">Belongs to the class-I aminoacyl-tRNA synthetase family.</text>
</comment>